<geneLocation type="chloroplast"/>
<keyword id="KW-0007">Acetylation</keyword>
<keyword id="KW-0106">Calcium</keyword>
<keyword id="KW-0148">Chlorophyll</keyword>
<keyword id="KW-0150">Chloroplast</keyword>
<keyword id="KW-0157">Chromophore</keyword>
<keyword id="KW-0249">Electron transport</keyword>
<keyword id="KW-0359">Herbicide resistance</keyword>
<keyword id="KW-0408">Iron</keyword>
<keyword id="KW-0460">Magnesium</keyword>
<keyword id="KW-0464">Manganese</keyword>
<keyword id="KW-0472">Membrane</keyword>
<keyword id="KW-0479">Metal-binding</keyword>
<keyword id="KW-0560">Oxidoreductase</keyword>
<keyword id="KW-0597">Phosphoprotein</keyword>
<keyword id="KW-0602">Photosynthesis</keyword>
<keyword id="KW-0604">Photosystem II</keyword>
<keyword id="KW-0934">Plastid</keyword>
<keyword id="KW-0793">Thylakoid</keyword>
<keyword id="KW-0812">Transmembrane</keyword>
<keyword id="KW-1133">Transmembrane helix</keyword>
<keyword id="KW-0813">Transport</keyword>
<organism>
    <name type="scientific">Populus alba</name>
    <name type="common">White poplar</name>
    <dbReference type="NCBI Taxonomy" id="43335"/>
    <lineage>
        <taxon>Eukaryota</taxon>
        <taxon>Viridiplantae</taxon>
        <taxon>Streptophyta</taxon>
        <taxon>Embryophyta</taxon>
        <taxon>Tracheophyta</taxon>
        <taxon>Spermatophyta</taxon>
        <taxon>Magnoliopsida</taxon>
        <taxon>eudicotyledons</taxon>
        <taxon>Gunneridae</taxon>
        <taxon>Pentapetalae</taxon>
        <taxon>rosids</taxon>
        <taxon>fabids</taxon>
        <taxon>Malpighiales</taxon>
        <taxon>Salicaceae</taxon>
        <taxon>Saliceae</taxon>
        <taxon>Populus</taxon>
    </lineage>
</organism>
<accession>Q14FH6</accession>
<evidence type="ECO:0000255" key="1">
    <source>
        <dbReference type="HAMAP-Rule" id="MF_01379"/>
    </source>
</evidence>
<dbReference type="EC" id="1.10.3.9" evidence="1"/>
<dbReference type="EMBL" id="AP008956">
    <property type="protein sequence ID" value="BAE97186.1"/>
    <property type="molecule type" value="Genomic_DNA"/>
</dbReference>
<dbReference type="RefSeq" id="YP_665539.1">
    <property type="nucleotide sequence ID" value="NC_008235.1"/>
</dbReference>
<dbReference type="SMR" id="Q14FH6"/>
<dbReference type="GeneID" id="4178158"/>
<dbReference type="KEGG" id="palz:4178158"/>
<dbReference type="OrthoDB" id="4290at3646"/>
<dbReference type="GO" id="GO:0009535">
    <property type="term" value="C:chloroplast thylakoid membrane"/>
    <property type="evidence" value="ECO:0007669"/>
    <property type="project" value="UniProtKB-SubCell"/>
</dbReference>
<dbReference type="GO" id="GO:0009523">
    <property type="term" value="C:photosystem II"/>
    <property type="evidence" value="ECO:0007669"/>
    <property type="project" value="UniProtKB-KW"/>
</dbReference>
<dbReference type="GO" id="GO:0016168">
    <property type="term" value="F:chlorophyll binding"/>
    <property type="evidence" value="ECO:0007669"/>
    <property type="project" value="UniProtKB-UniRule"/>
</dbReference>
<dbReference type="GO" id="GO:0045156">
    <property type="term" value="F:electron transporter, transferring electrons within the cyclic electron transport pathway of photosynthesis activity"/>
    <property type="evidence" value="ECO:0007669"/>
    <property type="project" value="InterPro"/>
</dbReference>
<dbReference type="GO" id="GO:0005506">
    <property type="term" value="F:iron ion binding"/>
    <property type="evidence" value="ECO:0007669"/>
    <property type="project" value="UniProtKB-UniRule"/>
</dbReference>
<dbReference type="GO" id="GO:0016682">
    <property type="term" value="F:oxidoreductase activity, acting on diphenols and related substances as donors, oxygen as acceptor"/>
    <property type="evidence" value="ECO:0007669"/>
    <property type="project" value="UniProtKB-UniRule"/>
</dbReference>
<dbReference type="GO" id="GO:0010242">
    <property type="term" value="F:oxygen evolving activity"/>
    <property type="evidence" value="ECO:0007669"/>
    <property type="project" value="UniProtKB-EC"/>
</dbReference>
<dbReference type="GO" id="GO:0009772">
    <property type="term" value="P:photosynthetic electron transport in photosystem II"/>
    <property type="evidence" value="ECO:0007669"/>
    <property type="project" value="InterPro"/>
</dbReference>
<dbReference type="GO" id="GO:0009635">
    <property type="term" value="P:response to herbicide"/>
    <property type="evidence" value="ECO:0007669"/>
    <property type="project" value="UniProtKB-KW"/>
</dbReference>
<dbReference type="CDD" id="cd09289">
    <property type="entry name" value="Photosystem-II_D1"/>
    <property type="match status" value="1"/>
</dbReference>
<dbReference type="FunFam" id="1.20.85.10:FF:000002">
    <property type="entry name" value="Photosystem II protein D1"/>
    <property type="match status" value="1"/>
</dbReference>
<dbReference type="Gene3D" id="1.20.85.10">
    <property type="entry name" value="Photosystem II protein D1-like"/>
    <property type="match status" value="1"/>
</dbReference>
<dbReference type="HAMAP" id="MF_01379">
    <property type="entry name" value="PSII_PsbA_D1"/>
    <property type="match status" value="1"/>
</dbReference>
<dbReference type="InterPro" id="IPR055266">
    <property type="entry name" value="D1/D2"/>
</dbReference>
<dbReference type="InterPro" id="IPR036854">
    <property type="entry name" value="Photo_II_D1/D2_sf"/>
</dbReference>
<dbReference type="InterPro" id="IPR000484">
    <property type="entry name" value="Photo_RC_L/M"/>
</dbReference>
<dbReference type="InterPro" id="IPR055265">
    <property type="entry name" value="Photo_RC_L/M_CS"/>
</dbReference>
<dbReference type="InterPro" id="IPR005867">
    <property type="entry name" value="PSII_D1"/>
</dbReference>
<dbReference type="NCBIfam" id="TIGR01151">
    <property type="entry name" value="psbA"/>
    <property type="match status" value="1"/>
</dbReference>
<dbReference type="PANTHER" id="PTHR33149:SF12">
    <property type="entry name" value="PHOTOSYSTEM II D2 PROTEIN"/>
    <property type="match status" value="1"/>
</dbReference>
<dbReference type="PANTHER" id="PTHR33149">
    <property type="entry name" value="PHOTOSYSTEM II PROTEIN D1"/>
    <property type="match status" value="1"/>
</dbReference>
<dbReference type="Pfam" id="PF00124">
    <property type="entry name" value="Photo_RC"/>
    <property type="match status" value="1"/>
</dbReference>
<dbReference type="PRINTS" id="PR00256">
    <property type="entry name" value="REACTNCENTRE"/>
</dbReference>
<dbReference type="SUPFAM" id="SSF81483">
    <property type="entry name" value="Bacterial photosystem II reaction centre, L and M subunits"/>
    <property type="match status" value="1"/>
</dbReference>
<dbReference type="PROSITE" id="PS00244">
    <property type="entry name" value="REACTION_CENTER"/>
    <property type="match status" value="1"/>
</dbReference>
<name>PSBA_POPAL</name>
<comment type="function">
    <text evidence="1">Photosystem II (PSII) is a light-driven water:plastoquinone oxidoreductase that uses light energy to abstract electrons from H(2)O, generating O(2) and a proton gradient subsequently used for ATP formation. It consists of a core antenna complex that captures photons, and an electron transfer chain that converts photonic excitation into a charge separation. The D1/D2 (PsbA/PsbD) reaction center heterodimer binds P680, the primary electron donor of PSII as well as several subsequent electron acceptors.</text>
</comment>
<comment type="catalytic activity">
    <reaction evidence="1">
        <text>2 a plastoquinone + 4 hnu + 2 H2O = 2 a plastoquinol + O2</text>
        <dbReference type="Rhea" id="RHEA:36359"/>
        <dbReference type="Rhea" id="RHEA-COMP:9561"/>
        <dbReference type="Rhea" id="RHEA-COMP:9562"/>
        <dbReference type="ChEBI" id="CHEBI:15377"/>
        <dbReference type="ChEBI" id="CHEBI:15379"/>
        <dbReference type="ChEBI" id="CHEBI:17757"/>
        <dbReference type="ChEBI" id="CHEBI:30212"/>
        <dbReference type="ChEBI" id="CHEBI:62192"/>
        <dbReference type="EC" id="1.10.3.9"/>
    </reaction>
</comment>
<comment type="cofactor">
    <text evidence="1">The D1/D2 heterodimer binds P680, chlorophylls that are the primary electron donor of PSII, and subsequent electron acceptors. It shares a non-heme iron and each subunit binds pheophytin, quinone, additional chlorophylls, carotenoids and lipids. D1 provides most of the ligands for the Mn4-Ca-O5 cluster of the oxygen-evolving complex (OEC). There is also a Cl(-1) ion associated with D1 and D2, which is required for oxygen evolution. The PSII complex binds additional chlorophylls, carotenoids and specific lipids.</text>
</comment>
<comment type="subunit">
    <text evidence="1">PSII is composed of 1 copy each of membrane proteins PsbA, PsbB, PsbC, PsbD, PsbE, PsbF, PsbH, PsbI, PsbJ, PsbK, PsbL, PsbM, PsbT, PsbX, PsbY, PsbZ, Psb30/Ycf12, at least 3 peripheral proteins of the oxygen-evolving complex and a large number of cofactors. It forms dimeric complexes.</text>
</comment>
<comment type="subcellular location">
    <subcellularLocation>
        <location evidence="1">Plastid</location>
        <location evidence="1">Chloroplast thylakoid membrane</location>
        <topology evidence="1">Multi-pass membrane protein</topology>
    </subcellularLocation>
</comment>
<comment type="PTM">
    <text evidence="1">Tyr-161 forms a radical intermediate that is referred to as redox-active TyrZ, YZ or Y-Z.</text>
</comment>
<comment type="PTM">
    <text evidence="1">C-terminally processed by CTPA; processing is essential to allow assembly of the oxygen-evolving complex and thus photosynthetic growth.</text>
</comment>
<comment type="miscellaneous">
    <text evidence="1">2 of the reaction center chlorophylls (ChlD1 and ChlD2) are entirely coordinated by water.</text>
</comment>
<comment type="miscellaneous">
    <text evidence="1">Herbicides such as atrazine, BNT, diuron or ioxynil bind in the Q(B) binding site and block subsequent electron transfer.</text>
</comment>
<comment type="similarity">
    <text evidence="1">Belongs to the reaction center PufL/M/PsbA/D family.</text>
</comment>
<reference key="1">
    <citation type="submission" date="2005-03" db="EMBL/GenBank/DDBJ databases">
        <title>Complete structure of the chloroplast genome of Populus alba.</title>
        <authorList>
            <person name="Okumura S."/>
            <person name="Yamashita A."/>
            <person name="Kanamoto H."/>
            <person name="Hattori M."/>
            <person name="Takase H."/>
            <person name="Tomizawa K."/>
        </authorList>
    </citation>
    <scope>NUCLEOTIDE SEQUENCE [LARGE SCALE GENOMIC DNA]</scope>
</reference>
<feature type="initiator methionine" description="Removed" evidence="1">
    <location>
        <position position="1"/>
    </location>
</feature>
<feature type="chain" id="PRO_0000340056" description="Photosystem II protein D1" evidence="1">
    <location>
        <begin position="2"/>
        <end position="344"/>
    </location>
</feature>
<feature type="propeptide" id="PRO_0000340057" evidence="1">
    <location>
        <begin position="345"/>
        <end position="353"/>
    </location>
</feature>
<feature type="transmembrane region" description="Helical" evidence="1">
    <location>
        <begin position="29"/>
        <end position="46"/>
    </location>
</feature>
<feature type="transmembrane region" description="Helical" evidence="1">
    <location>
        <begin position="118"/>
        <end position="133"/>
    </location>
</feature>
<feature type="transmembrane region" description="Helical" evidence="1">
    <location>
        <begin position="142"/>
        <end position="156"/>
    </location>
</feature>
<feature type="transmembrane region" description="Helical" evidence="1">
    <location>
        <begin position="197"/>
        <end position="218"/>
    </location>
</feature>
<feature type="transmembrane region" description="Helical" evidence="1">
    <location>
        <begin position="274"/>
        <end position="288"/>
    </location>
</feature>
<feature type="binding site" description="axial binding residue" evidence="1">
    <location>
        <position position="118"/>
    </location>
    <ligand>
        <name>chlorophyll a</name>
        <dbReference type="ChEBI" id="CHEBI:58416"/>
        <label>ChlzD1</label>
    </ligand>
    <ligandPart>
        <name>Mg</name>
        <dbReference type="ChEBI" id="CHEBI:25107"/>
    </ligandPart>
</feature>
<feature type="binding site" evidence="1">
    <location>
        <position position="126"/>
    </location>
    <ligand>
        <name>pheophytin a</name>
        <dbReference type="ChEBI" id="CHEBI:136840"/>
        <label>D1</label>
    </ligand>
</feature>
<feature type="binding site" evidence="1">
    <location>
        <position position="170"/>
    </location>
    <ligand>
        <name>[CaMn4O5] cluster</name>
        <dbReference type="ChEBI" id="CHEBI:189552"/>
    </ligand>
</feature>
<feature type="binding site" evidence="1">
    <location>
        <position position="189"/>
    </location>
    <ligand>
        <name>[CaMn4O5] cluster</name>
        <dbReference type="ChEBI" id="CHEBI:189552"/>
    </ligand>
</feature>
<feature type="binding site" description="axial binding residue" evidence="1">
    <location>
        <position position="198"/>
    </location>
    <ligand>
        <name>chlorophyll a</name>
        <dbReference type="ChEBI" id="CHEBI:58416"/>
        <label>PD1</label>
    </ligand>
    <ligandPart>
        <name>Mg</name>
        <dbReference type="ChEBI" id="CHEBI:25107"/>
    </ligandPart>
</feature>
<feature type="binding site" evidence="1">
    <location>
        <position position="215"/>
    </location>
    <ligand>
        <name>a quinone</name>
        <dbReference type="ChEBI" id="CHEBI:132124"/>
        <label>B</label>
    </ligand>
</feature>
<feature type="binding site" evidence="1">
    <location>
        <position position="215"/>
    </location>
    <ligand>
        <name>Fe cation</name>
        <dbReference type="ChEBI" id="CHEBI:24875"/>
        <note>ligand shared with heterodimeric partner</note>
    </ligand>
</feature>
<feature type="binding site" evidence="1">
    <location>
        <begin position="264"/>
        <end position="265"/>
    </location>
    <ligand>
        <name>a quinone</name>
        <dbReference type="ChEBI" id="CHEBI:132124"/>
        <label>B</label>
    </ligand>
</feature>
<feature type="binding site" evidence="1">
    <location>
        <position position="272"/>
    </location>
    <ligand>
        <name>Fe cation</name>
        <dbReference type="ChEBI" id="CHEBI:24875"/>
        <note>ligand shared with heterodimeric partner</note>
    </ligand>
</feature>
<feature type="binding site" evidence="1">
    <location>
        <position position="332"/>
    </location>
    <ligand>
        <name>[CaMn4O5] cluster</name>
        <dbReference type="ChEBI" id="CHEBI:189552"/>
    </ligand>
</feature>
<feature type="binding site" evidence="1">
    <location>
        <position position="333"/>
    </location>
    <ligand>
        <name>[CaMn4O5] cluster</name>
        <dbReference type="ChEBI" id="CHEBI:189552"/>
    </ligand>
</feature>
<feature type="binding site" evidence="1">
    <location>
        <position position="342"/>
    </location>
    <ligand>
        <name>[CaMn4O5] cluster</name>
        <dbReference type="ChEBI" id="CHEBI:189552"/>
    </ligand>
</feature>
<feature type="binding site" evidence="1">
    <location>
        <position position="344"/>
    </location>
    <ligand>
        <name>[CaMn4O5] cluster</name>
        <dbReference type="ChEBI" id="CHEBI:189552"/>
    </ligand>
</feature>
<feature type="site" description="Tyrosine radical intermediate" evidence="1">
    <location>
        <position position="161"/>
    </location>
</feature>
<feature type="site" description="Stabilizes free radical intermediate" evidence="1">
    <location>
        <position position="190"/>
    </location>
</feature>
<feature type="site" description="Cleavage; by CTPA" evidence="1">
    <location>
        <begin position="344"/>
        <end position="345"/>
    </location>
</feature>
<feature type="modified residue" description="N-acetylthreonine" evidence="1">
    <location>
        <position position="2"/>
    </location>
</feature>
<feature type="modified residue" description="Phosphothreonine" evidence="1">
    <location>
        <position position="2"/>
    </location>
</feature>
<proteinExistence type="inferred from homology"/>
<sequence length="353" mass="38965">MTAILERRESESLWGRFCNWITSTENRLYIGWFGVLMIPTLLTATSVFIIAFIAAPPVDIDGIREPVSGSLLYGNNIISGAIIPTSAAIGLHFYPIWEAASVDEWLYNGGPYELIVLHFLLGVACYMGREWELSFRLGMRPWIAVAYSAPVAAATAVFLIYPIGQGSFSDGMPLGISGTFNFMIVFQAEHNILMHPFHMLGVAGVFGGSLFSAMHGSLVTSSLIRETTENESANEGYRFGQEEETYNIVAAHGYFGRLIFQYASFNNSRSLHFFLAAWPVVGIWFTALGISTMAFNLNGFNFNQSVVDSQGRVINTWADIINRANLGMEVMHERNAHNFPLDLAAVEVPSTNG</sequence>
<protein>
    <recommendedName>
        <fullName evidence="1">Photosystem II protein D1</fullName>
        <shortName evidence="1">PSII D1 protein</shortName>
        <ecNumber evidence="1">1.10.3.9</ecNumber>
    </recommendedName>
    <alternativeName>
        <fullName evidence="1">Photosystem II Q(B) protein</fullName>
    </alternativeName>
</protein>
<gene>
    <name evidence="1" type="primary">psbA</name>
</gene>